<keyword id="KW-0028">Amino-acid biosynthesis</keyword>
<keyword id="KW-0055">Arginine biosynthesis</keyword>
<keyword id="KW-0963">Cytoplasm</keyword>
<keyword id="KW-0238">DNA-binding</keyword>
<keyword id="KW-0678">Repressor</keyword>
<keyword id="KW-0804">Transcription</keyword>
<keyword id="KW-0805">Transcription regulation</keyword>
<comment type="function">
    <text evidence="1">Regulates arginine biosynthesis genes.</text>
</comment>
<comment type="pathway">
    <text>Amino-acid biosynthesis; L-arginine biosynthesis [regulation].</text>
</comment>
<comment type="subcellular location">
    <subcellularLocation>
        <location evidence="1">Cytoplasm</location>
    </subcellularLocation>
</comment>
<comment type="similarity">
    <text evidence="1">Belongs to the ArgR family.</text>
</comment>
<accession>B0K0V5</accession>
<organism>
    <name type="scientific">Thermoanaerobacter sp. (strain X514)</name>
    <dbReference type="NCBI Taxonomy" id="399726"/>
    <lineage>
        <taxon>Bacteria</taxon>
        <taxon>Bacillati</taxon>
        <taxon>Bacillota</taxon>
        <taxon>Clostridia</taxon>
        <taxon>Thermoanaerobacterales</taxon>
        <taxon>Thermoanaerobacteraceae</taxon>
        <taxon>Thermoanaerobacter</taxon>
    </lineage>
</organism>
<feature type="chain" id="PRO_1000097893" description="Arginine repressor">
    <location>
        <begin position="1"/>
        <end position="150"/>
    </location>
</feature>
<proteinExistence type="inferred from homology"/>
<gene>
    <name evidence="1" type="primary">argR</name>
    <name type="ordered locus">Teth514_1543</name>
</gene>
<protein>
    <recommendedName>
        <fullName evidence="1">Arginine repressor</fullName>
    </recommendedName>
</protein>
<evidence type="ECO:0000255" key="1">
    <source>
        <dbReference type="HAMAP-Rule" id="MF_00173"/>
    </source>
</evidence>
<dbReference type="EMBL" id="CP000923">
    <property type="protein sequence ID" value="ABY92830.1"/>
    <property type="molecule type" value="Genomic_DNA"/>
</dbReference>
<dbReference type="RefSeq" id="WP_012268715.1">
    <property type="nucleotide sequence ID" value="NC_010320.1"/>
</dbReference>
<dbReference type="SMR" id="B0K0V5"/>
<dbReference type="KEGG" id="tex:Teth514_1543"/>
<dbReference type="HOGENOM" id="CLU_097103_3_0_9"/>
<dbReference type="UniPathway" id="UPA00068"/>
<dbReference type="Proteomes" id="UP000002155">
    <property type="component" value="Chromosome"/>
</dbReference>
<dbReference type="GO" id="GO:0005737">
    <property type="term" value="C:cytoplasm"/>
    <property type="evidence" value="ECO:0007669"/>
    <property type="project" value="UniProtKB-SubCell"/>
</dbReference>
<dbReference type="GO" id="GO:0034618">
    <property type="term" value="F:arginine binding"/>
    <property type="evidence" value="ECO:0007669"/>
    <property type="project" value="InterPro"/>
</dbReference>
<dbReference type="GO" id="GO:0003677">
    <property type="term" value="F:DNA binding"/>
    <property type="evidence" value="ECO:0007669"/>
    <property type="project" value="UniProtKB-KW"/>
</dbReference>
<dbReference type="GO" id="GO:0003700">
    <property type="term" value="F:DNA-binding transcription factor activity"/>
    <property type="evidence" value="ECO:0007669"/>
    <property type="project" value="UniProtKB-UniRule"/>
</dbReference>
<dbReference type="GO" id="GO:0006526">
    <property type="term" value="P:L-arginine biosynthetic process"/>
    <property type="evidence" value="ECO:0007669"/>
    <property type="project" value="UniProtKB-UniPathway"/>
</dbReference>
<dbReference type="GO" id="GO:0051259">
    <property type="term" value="P:protein complex oligomerization"/>
    <property type="evidence" value="ECO:0007669"/>
    <property type="project" value="InterPro"/>
</dbReference>
<dbReference type="GO" id="GO:1900079">
    <property type="term" value="P:regulation of arginine biosynthetic process"/>
    <property type="evidence" value="ECO:0007669"/>
    <property type="project" value="UniProtKB-UniRule"/>
</dbReference>
<dbReference type="Gene3D" id="3.30.1360.40">
    <property type="match status" value="1"/>
</dbReference>
<dbReference type="Gene3D" id="1.10.10.10">
    <property type="entry name" value="Winged helix-like DNA-binding domain superfamily/Winged helix DNA-binding domain"/>
    <property type="match status" value="1"/>
</dbReference>
<dbReference type="HAMAP" id="MF_00173">
    <property type="entry name" value="Arg_repressor"/>
    <property type="match status" value="1"/>
</dbReference>
<dbReference type="InterPro" id="IPR001669">
    <property type="entry name" value="Arg_repress"/>
</dbReference>
<dbReference type="InterPro" id="IPR020899">
    <property type="entry name" value="Arg_repress_C"/>
</dbReference>
<dbReference type="InterPro" id="IPR036251">
    <property type="entry name" value="Arg_repress_C_sf"/>
</dbReference>
<dbReference type="InterPro" id="IPR020900">
    <property type="entry name" value="Arg_repress_DNA-bd"/>
</dbReference>
<dbReference type="InterPro" id="IPR036388">
    <property type="entry name" value="WH-like_DNA-bd_sf"/>
</dbReference>
<dbReference type="InterPro" id="IPR036390">
    <property type="entry name" value="WH_DNA-bd_sf"/>
</dbReference>
<dbReference type="NCBIfam" id="TIGR01529">
    <property type="entry name" value="argR_whole"/>
    <property type="match status" value="1"/>
</dbReference>
<dbReference type="NCBIfam" id="NF001680">
    <property type="entry name" value="PRK00441.1"/>
    <property type="match status" value="1"/>
</dbReference>
<dbReference type="PANTHER" id="PTHR34471">
    <property type="entry name" value="ARGININE REPRESSOR"/>
    <property type="match status" value="1"/>
</dbReference>
<dbReference type="PANTHER" id="PTHR34471:SF1">
    <property type="entry name" value="ARGININE REPRESSOR"/>
    <property type="match status" value="1"/>
</dbReference>
<dbReference type="Pfam" id="PF01316">
    <property type="entry name" value="Arg_repressor"/>
    <property type="match status" value="1"/>
</dbReference>
<dbReference type="Pfam" id="PF02863">
    <property type="entry name" value="Arg_repressor_C"/>
    <property type="match status" value="1"/>
</dbReference>
<dbReference type="PRINTS" id="PR01467">
    <property type="entry name" value="ARGREPRESSOR"/>
</dbReference>
<dbReference type="SUPFAM" id="SSF55252">
    <property type="entry name" value="C-terminal domain of arginine repressor"/>
    <property type="match status" value="1"/>
</dbReference>
<dbReference type="SUPFAM" id="SSF46785">
    <property type="entry name" value="Winged helix' DNA-binding domain"/>
    <property type="match status" value="1"/>
</dbReference>
<reference key="1">
    <citation type="submission" date="2008-01" db="EMBL/GenBank/DDBJ databases">
        <title>Complete sequence of Thermoanaerobacter sp. X514.</title>
        <authorList>
            <consortium name="US DOE Joint Genome Institute"/>
            <person name="Copeland A."/>
            <person name="Lucas S."/>
            <person name="Lapidus A."/>
            <person name="Barry K."/>
            <person name="Glavina del Rio T."/>
            <person name="Dalin E."/>
            <person name="Tice H."/>
            <person name="Pitluck S."/>
            <person name="Bruce D."/>
            <person name="Goodwin L."/>
            <person name="Saunders E."/>
            <person name="Brettin T."/>
            <person name="Detter J.C."/>
            <person name="Han C."/>
            <person name="Schmutz J."/>
            <person name="Larimer F."/>
            <person name="Land M."/>
            <person name="Hauser L."/>
            <person name="Kyrpides N."/>
            <person name="Kim E."/>
            <person name="Hemme C."/>
            <person name="Fields M.W."/>
            <person name="He Z."/>
            <person name="Zhou J."/>
            <person name="Richardson P."/>
        </authorList>
    </citation>
    <scope>NUCLEOTIDE SEQUENCE [LARGE SCALE GENOMIC DNA]</scope>
    <source>
        <strain>X514</strain>
    </source>
</reference>
<sequence length="150" mass="16689">MKIARHAKILEIISEKEIETQEELAAELQKQGIDVTQATVSRDIKELRLIKVLTEDGKRYKYAPMGKVDGHITDRLMTLLSESIVSVDYAGNIIVIKTLSGTAPAAAEAIDTLNWKNIVGTLAGDNTIFVLVRNEEALQELLEKFKKLVK</sequence>
<name>ARGR_THEPX</name>